<keyword id="KW-0378">Hydrolase</keyword>
<keyword id="KW-0472">Membrane</keyword>
<keyword id="KW-0479">Metal-binding</keyword>
<keyword id="KW-0645">Protease</keyword>
<keyword id="KW-1185">Reference proteome</keyword>
<keyword id="KW-0812">Transmembrane</keyword>
<keyword id="KW-1133">Transmembrane helix</keyword>
<keyword id="KW-0862">Zinc</keyword>
<reference key="1">
    <citation type="journal article" date="2005" name="Nature">
        <title>The genome of the social amoeba Dictyostelium discoideum.</title>
        <authorList>
            <person name="Eichinger L."/>
            <person name="Pachebat J.A."/>
            <person name="Gloeckner G."/>
            <person name="Rajandream M.A."/>
            <person name="Sucgang R."/>
            <person name="Berriman M."/>
            <person name="Song J."/>
            <person name="Olsen R."/>
            <person name="Szafranski K."/>
            <person name="Xu Q."/>
            <person name="Tunggal B."/>
            <person name="Kummerfeld S."/>
            <person name="Madera M."/>
            <person name="Konfortov B.A."/>
            <person name="Rivero F."/>
            <person name="Bankier A.T."/>
            <person name="Lehmann R."/>
            <person name="Hamlin N."/>
            <person name="Davies R."/>
            <person name="Gaudet P."/>
            <person name="Fey P."/>
            <person name="Pilcher K."/>
            <person name="Chen G."/>
            <person name="Saunders D."/>
            <person name="Sodergren E.J."/>
            <person name="Davis P."/>
            <person name="Kerhornou A."/>
            <person name="Nie X."/>
            <person name="Hall N."/>
            <person name="Anjard C."/>
            <person name="Hemphill L."/>
            <person name="Bason N."/>
            <person name="Farbrother P."/>
            <person name="Desany B."/>
            <person name="Just E."/>
            <person name="Morio T."/>
            <person name="Rost R."/>
            <person name="Churcher C.M."/>
            <person name="Cooper J."/>
            <person name="Haydock S."/>
            <person name="van Driessche N."/>
            <person name="Cronin A."/>
            <person name="Goodhead I."/>
            <person name="Muzny D.M."/>
            <person name="Mourier T."/>
            <person name="Pain A."/>
            <person name="Lu M."/>
            <person name="Harper D."/>
            <person name="Lindsay R."/>
            <person name="Hauser H."/>
            <person name="James K.D."/>
            <person name="Quiles M."/>
            <person name="Madan Babu M."/>
            <person name="Saito T."/>
            <person name="Buchrieser C."/>
            <person name="Wardroper A."/>
            <person name="Felder M."/>
            <person name="Thangavelu M."/>
            <person name="Johnson D."/>
            <person name="Knights A."/>
            <person name="Loulseged H."/>
            <person name="Mungall K.L."/>
            <person name="Oliver K."/>
            <person name="Price C."/>
            <person name="Quail M.A."/>
            <person name="Urushihara H."/>
            <person name="Hernandez J."/>
            <person name="Rabbinowitsch E."/>
            <person name="Steffen D."/>
            <person name="Sanders M."/>
            <person name="Ma J."/>
            <person name="Kohara Y."/>
            <person name="Sharp S."/>
            <person name="Simmonds M.N."/>
            <person name="Spiegler S."/>
            <person name="Tivey A."/>
            <person name="Sugano S."/>
            <person name="White B."/>
            <person name="Walker D."/>
            <person name="Woodward J.R."/>
            <person name="Winckler T."/>
            <person name="Tanaka Y."/>
            <person name="Shaulsky G."/>
            <person name="Schleicher M."/>
            <person name="Weinstock G.M."/>
            <person name="Rosenthal A."/>
            <person name="Cox E.C."/>
            <person name="Chisholm R.L."/>
            <person name="Gibbs R.A."/>
            <person name="Loomis W.F."/>
            <person name="Platzer M."/>
            <person name="Kay R.R."/>
            <person name="Williams J.G."/>
            <person name="Dear P.H."/>
            <person name="Noegel A.A."/>
            <person name="Barrell B.G."/>
            <person name="Kuspa A."/>
        </authorList>
    </citation>
    <scope>NUCLEOTIDE SEQUENCE [LARGE SCALE GENOMIC DNA]</scope>
    <source>
        <strain>AX4</strain>
    </source>
</reference>
<organism>
    <name type="scientific">Dictyostelium discoideum</name>
    <name type="common">Social amoeba</name>
    <dbReference type="NCBI Taxonomy" id="44689"/>
    <lineage>
        <taxon>Eukaryota</taxon>
        <taxon>Amoebozoa</taxon>
        <taxon>Evosea</taxon>
        <taxon>Eumycetozoa</taxon>
        <taxon>Dictyostelia</taxon>
        <taxon>Dictyosteliales</taxon>
        <taxon>Dictyosteliaceae</taxon>
        <taxon>Dictyostelium</taxon>
    </lineage>
</organism>
<comment type="cofactor">
    <cofactor evidence="1">
        <name>Zn(2+)</name>
        <dbReference type="ChEBI" id="CHEBI:29105"/>
    </cofactor>
    <text evidence="1">Binds 2 Zn(2+) ions per subunit.</text>
</comment>
<comment type="subcellular location">
    <subcellularLocation>
        <location evidence="3">Membrane</location>
        <topology evidence="3">Single-pass membrane protein</topology>
    </subcellularLocation>
</comment>
<comment type="similarity">
    <text evidence="3">Belongs to the peptidase M20A family.</text>
</comment>
<accession>Q55FR8</accession>
<protein>
    <recommendedName>
        <fullName>Probable carboxypeptidase S-like 2</fullName>
        <ecNumber>3.4.17.-</ecNumber>
    </recommendedName>
</protein>
<sequence length="519" mass="58763">MDKRKQSDYDNGKSKPTNGSKTTKFNLIKIIIRNLLIGILLMLVLNTIRFTSKQPKVEILSPDHIDSFTTLSDIELAQRLAKATTFKTISFGESDEFDQYEPEFLKFHEFLKITFPKVHKYLKLNIIANYSLVYNWKGLDESLKPILLAGHIDVVPTLFLDKWTHPPFSGHIDDTYIWGRGTMDDKGSVMAILESVEDLLSQGFKPQRSIYFAFGHDEELGGNNGAFNINKYFDTNEIGPFEFILDEGLPILLPPVFPGLSKPIASVGITEKGAIDIKLSVTIVGGHSSMPRRESAIGVLAQAVSKLENNPPSPKLRETRLLFDFVGRECSLPYRFLFSNLWLFEPIISRVLSTKPTLDALQRTTTALTIFNAGNKANVIPMEANATINFRVVPGDSTNDIIDHVNRVINDDRVKISKISNIIEPAPVSSTTSKSFNLLQSTILQEFPDVVVAPTIMIANTDTRHYWNLTENIFRFCPMVLENSDLQRLHGIDERLTIKNYKQLVDFYYHLIKNTEKYL</sequence>
<evidence type="ECO:0000250" key="1"/>
<evidence type="ECO:0000255" key="2"/>
<evidence type="ECO:0000305" key="3"/>
<proteinExistence type="inferred from homology"/>
<feature type="chain" id="PRO_0000327534" description="Probable carboxypeptidase S-like 2">
    <location>
        <begin position="1"/>
        <end position="519"/>
    </location>
</feature>
<feature type="transmembrane region" description="Helical" evidence="2">
    <location>
        <begin position="25"/>
        <end position="45"/>
    </location>
</feature>
<feature type="active site" evidence="1">
    <location>
        <position position="153"/>
    </location>
</feature>
<feature type="active site" description="Proton acceptor" evidence="1">
    <location>
        <position position="218"/>
    </location>
</feature>
<feature type="binding site" evidence="1">
    <location>
        <position position="151"/>
    </location>
    <ligand>
        <name>Zn(2+)</name>
        <dbReference type="ChEBI" id="CHEBI:29105"/>
        <label>2</label>
    </ligand>
</feature>
<feature type="binding site" evidence="1">
    <location>
        <position position="184"/>
    </location>
    <ligand>
        <name>Zn(2+)</name>
        <dbReference type="ChEBI" id="CHEBI:29105"/>
        <label>1</label>
    </ligand>
</feature>
<feature type="binding site" evidence="1">
    <location>
        <position position="184"/>
    </location>
    <ligand>
        <name>Zn(2+)</name>
        <dbReference type="ChEBI" id="CHEBI:29105"/>
        <label>2</label>
    </ligand>
</feature>
<feature type="binding site" evidence="1">
    <location>
        <position position="219"/>
    </location>
    <ligand>
        <name>Zn(2+)</name>
        <dbReference type="ChEBI" id="CHEBI:29105"/>
        <label>1</label>
    </ligand>
</feature>
<feature type="binding site" evidence="1">
    <location>
        <position position="246"/>
    </location>
    <ligand>
        <name>Zn(2+)</name>
        <dbReference type="ChEBI" id="CHEBI:29105"/>
        <label>2</label>
    </ligand>
</feature>
<feature type="binding site" evidence="1">
    <location>
        <position position="490"/>
    </location>
    <ligand>
        <name>Zn(2+)</name>
        <dbReference type="ChEBI" id="CHEBI:29105"/>
        <label>1</label>
    </ligand>
</feature>
<gene>
    <name type="ORF">DDB_G0267984</name>
</gene>
<name>CBPS2_DICDI</name>
<dbReference type="EC" id="3.4.17.-"/>
<dbReference type="EMBL" id="AAFI02000003">
    <property type="protein sequence ID" value="EAL73445.1"/>
    <property type="molecule type" value="Genomic_DNA"/>
</dbReference>
<dbReference type="RefSeq" id="XP_647465.1">
    <property type="nucleotide sequence ID" value="XM_642373.1"/>
</dbReference>
<dbReference type="SMR" id="Q55FR8"/>
<dbReference type="STRING" id="44689.Q55FR8"/>
<dbReference type="PaxDb" id="44689-DDB0233064"/>
<dbReference type="EnsemblProtists" id="EAL73445">
    <property type="protein sequence ID" value="EAL73445"/>
    <property type="gene ID" value="DDB_G0267984"/>
</dbReference>
<dbReference type="GeneID" id="8616272"/>
<dbReference type="KEGG" id="ddi:DDB_G0267984"/>
<dbReference type="dictyBase" id="DDB_G0267984"/>
<dbReference type="VEuPathDB" id="AmoebaDB:DDB_G0267984"/>
<dbReference type="eggNOG" id="KOG2275">
    <property type="taxonomic scope" value="Eukaryota"/>
</dbReference>
<dbReference type="HOGENOM" id="CLU_021802_11_1_1"/>
<dbReference type="InParanoid" id="Q55FR8"/>
<dbReference type="OMA" id="DWTHHPF"/>
<dbReference type="PhylomeDB" id="Q55FR8"/>
<dbReference type="PRO" id="PR:Q55FR8"/>
<dbReference type="Proteomes" id="UP000002195">
    <property type="component" value="Chromosome 1"/>
</dbReference>
<dbReference type="GO" id="GO:0016020">
    <property type="term" value="C:membrane"/>
    <property type="evidence" value="ECO:0007669"/>
    <property type="project" value="UniProtKB-SubCell"/>
</dbReference>
<dbReference type="GO" id="GO:0046872">
    <property type="term" value="F:metal ion binding"/>
    <property type="evidence" value="ECO:0007669"/>
    <property type="project" value="UniProtKB-KW"/>
</dbReference>
<dbReference type="GO" id="GO:0008233">
    <property type="term" value="F:peptidase activity"/>
    <property type="evidence" value="ECO:0007669"/>
    <property type="project" value="UniProtKB-KW"/>
</dbReference>
<dbReference type="GO" id="GO:0006508">
    <property type="term" value="P:proteolysis"/>
    <property type="evidence" value="ECO:0007669"/>
    <property type="project" value="UniProtKB-KW"/>
</dbReference>
<dbReference type="CDD" id="cd05674">
    <property type="entry name" value="M20_yscS"/>
    <property type="match status" value="1"/>
</dbReference>
<dbReference type="FunFam" id="1.10.150.900:FF:000003">
    <property type="entry name" value="N-fatty-acyl-amino acid synthase/hydrolase PM20D1"/>
    <property type="match status" value="1"/>
</dbReference>
<dbReference type="FunFam" id="3.40.630.10:FF:000027">
    <property type="entry name" value="N-fatty-acyl-amino acid synthase/hydrolase PM20D1"/>
    <property type="match status" value="1"/>
</dbReference>
<dbReference type="Gene3D" id="1.10.150.900">
    <property type="match status" value="1"/>
</dbReference>
<dbReference type="Gene3D" id="3.30.70.360">
    <property type="match status" value="1"/>
</dbReference>
<dbReference type="Gene3D" id="3.40.630.10">
    <property type="entry name" value="Zn peptidases"/>
    <property type="match status" value="1"/>
</dbReference>
<dbReference type="InterPro" id="IPR001261">
    <property type="entry name" value="ArgE/DapE_CS"/>
</dbReference>
<dbReference type="InterPro" id="IPR036264">
    <property type="entry name" value="Bact_exopeptidase_dim_dom"/>
</dbReference>
<dbReference type="InterPro" id="IPR047177">
    <property type="entry name" value="Pept_M20A"/>
</dbReference>
<dbReference type="InterPro" id="IPR002933">
    <property type="entry name" value="Peptidase_M20"/>
</dbReference>
<dbReference type="InterPro" id="IPR011650">
    <property type="entry name" value="Peptidase_M20_dimer"/>
</dbReference>
<dbReference type="PANTHER" id="PTHR45962:SF2">
    <property type="entry name" value="CARBOXYPEPTIDASE S-LIKE 2-RELATED"/>
    <property type="match status" value="1"/>
</dbReference>
<dbReference type="PANTHER" id="PTHR45962">
    <property type="entry name" value="N-FATTY-ACYL-AMINO ACID SYNTHASE/HYDROLASE PM20D1"/>
    <property type="match status" value="1"/>
</dbReference>
<dbReference type="Pfam" id="PF07687">
    <property type="entry name" value="M20_dimer"/>
    <property type="match status" value="1"/>
</dbReference>
<dbReference type="Pfam" id="PF01546">
    <property type="entry name" value="Peptidase_M20"/>
    <property type="match status" value="1"/>
</dbReference>
<dbReference type="SUPFAM" id="SSF55031">
    <property type="entry name" value="Bacterial exopeptidase dimerisation domain"/>
    <property type="match status" value="1"/>
</dbReference>
<dbReference type="SUPFAM" id="SSF53187">
    <property type="entry name" value="Zn-dependent exopeptidases"/>
    <property type="match status" value="1"/>
</dbReference>
<dbReference type="PROSITE" id="PS00758">
    <property type="entry name" value="ARGE_DAPE_CPG2_1"/>
    <property type="match status" value="1"/>
</dbReference>